<feature type="chain" id="PRO_0000168046" description="Small ribosomal subunit protein bS20">
    <location>
        <begin position="1"/>
        <end position="98"/>
    </location>
</feature>
<organism>
    <name type="scientific">Parasynechococcus marenigrum (strain WH8102)</name>
    <dbReference type="NCBI Taxonomy" id="84588"/>
    <lineage>
        <taxon>Bacteria</taxon>
        <taxon>Bacillati</taxon>
        <taxon>Cyanobacteriota</taxon>
        <taxon>Cyanophyceae</taxon>
        <taxon>Synechococcales</taxon>
        <taxon>Prochlorococcaceae</taxon>
        <taxon>Parasynechococcus</taxon>
        <taxon>Parasynechococcus marenigrum</taxon>
    </lineage>
</organism>
<sequence>MANNQAAKKRIEIAERNRLRNRTYKSALRTLMKRCFVACEAYSKEPGDAAKATVSASMNAAFSKIDKAVKVGVLHRNNGAHQKSRLSATVRQVLEPSS</sequence>
<reference key="1">
    <citation type="journal article" date="2003" name="Nature">
        <title>The genome of a motile marine Synechococcus.</title>
        <authorList>
            <person name="Palenik B."/>
            <person name="Brahamsha B."/>
            <person name="Larimer F.W."/>
            <person name="Land M.L."/>
            <person name="Hauser L."/>
            <person name="Chain P."/>
            <person name="Lamerdin J.E."/>
            <person name="Regala W."/>
            <person name="Allen E.E."/>
            <person name="McCarren J."/>
            <person name="Paulsen I.T."/>
            <person name="Dufresne A."/>
            <person name="Partensky F."/>
            <person name="Webb E.A."/>
            <person name="Waterbury J."/>
        </authorList>
    </citation>
    <scope>NUCLEOTIDE SEQUENCE [LARGE SCALE GENOMIC DNA]</scope>
    <source>
        <strain>WH8102</strain>
    </source>
</reference>
<keyword id="KW-0687">Ribonucleoprotein</keyword>
<keyword id="KW-0689">Ribosomal protein</keyword>
<keyword id="KW-0694">RNA-binding</keyword>
<keyword id="KW-0699">rRNA-binding</keyword>
<protein>
    <recommendedName>
        <fullName evidence="1">Small ribosomal subunit protein bS20</fullName>
    </recommendedName>
    <alternativeName>
        <fullName evidence="2">30S ribosomal protein S20</fullName>
    </alternativeName>
</protein>
<accession>Q7U8K6</accession>
<comment type="function">
    <text evidence="1">Binds directly to 16S ribosomal RNA.</text>
</comment>
<comment type="similarity">
    <text evidence="1">Belongs to the bacterial ribosomal protein bS20 family.</text>
</comment>
<evidence type="ECO:0000255" key="1">
    <source>
        <dbReference type="HAMAP-Rule" id="MF_00500"/>
    </source>
</evidence>
<evidence type="ECO:0000305" key="2"/>
<gene>
    <name evidence="1" type="primary">rpsT</name>
    <name evidence="1" type="synonym">rps20</name>
    <name type="ordered locus">SYNW0611</name>
</gene>
<proteinExistence type="inferred from homology"/>
<dbReference type="EMBL" id="BX569690">
    <property type="protein sequence ID" value="CAE07126.1"/>
    <property type="molecule type" value="Genomic_DNA"/>
</dbReference>
<dbReference type="RefSeq" id="WP_011127478.1">
    <property type="nucleotide sequence ID" value="NC_005070.1"/>
</dbReference>
<dbReference type="SMR" id="Q7U8K6"/>
<dbReference type="STRING" id="84588.SYNW0611"/>
<dbReference type="KEGG" id="syw:SYNW0611"/>
<dbReference type="eggNOG" id="COG0268">
    <property type="taxonomic scope" value="Bacteria"/>
</dbReference>
<dbReference type="HOGENOM" id="CLU_160655_5_0_3"/>
<dbReference type="Proteomes" id="UP000001422">
    <property type="component" value="Chromosome"/>
</dbReference>
<dbReference type="GO" id="GO:0005829">
    <property type="term" value="C:cytosol"/>
    <property type="evidence" value="ECO:0007669"/>
    <property type="project" value="TreeGrafter"/>
</dbReference>
<dbReference type="GO" id="GO:0015935">
    <property type="term" value="C:small ribosomal subunit"/>
    <property type="evidence" value="ECO:0007669"/>
    <property type="project" value="TreeGrafter"/>
</dbReference>
<dbReference type="GO" id="GO:0070181">
    <property type="term" value="F:small ribosomal subunit rRNA binding"/>
    <property type="evidence" value="ECO:0007669"/>
    <property type="project" value="TreeGrafter"/>
</dbReference>
<dbReference type="GO" id="GO:0003735">
    <property type="term" value="F:structural constituent of ribosome"/>
    <property type="evidence" value="ECO:0007669"/>
    <property type="project" value="InterPro"/>
</dbReference>
<dbReference type="GO" id="GO:0006412">
    <property type="term" value="P:translation"/>
    <property type="evidence" value="ECO:0007669"/>
    <property type="project" value="UniProtKB-UniRule"/>
</dbReference>
<dbReference type="Gene3D" id="1.20.58.110">
    <property type="entry name" value="Ribosomal protein S20"/>
    <property type="match status" value="1"/>
</dbReference>
<dbReference type="HAMAP" id="MF_00500">
    <property type="entry name" value="Ribosomal_bS20"/>
    <property type="match status" value="1"/>
</dbReference>
<dbReference type="InterPro" id="IPR002583">
    <property type="entry name" value="Ribosomal_bS20"/>
</dbReference>
<dbReference type="InterPro" id="IPR036510">
    <property type="entry name" value="Ribosomal_bS20_sf"/>
</dbReference>
<dbReference type="NCBIfam" id="TIGR00029">
    <property type="entry name" value="S20"/>
    <property type="match status" value="1"/>
</dbReference>
<dbReference type="PANTHER" id="PTHR33398">
    <property type="entry name" value="30S RIBOSOMAL PROTEIN S20"/>
    <property type="match status" value="1"/>
</dbReference>
<dbReference type="PANTHER" id="PTHR33398:SF1">
    <property type="entry name" value="SMALL RIBOSOMAL SUBUNIT PROTEIN BS20C"/>
    <property type="match status" value="1"/>
</dbReference>
<dbReference type="Pfam" id="PF01649">
    <property type="entry name" value="Ribosomal_S20p"/>
    <property type="match status" value="1"/>
</dbReference>
<dbReference type="SUPFAM" id="SSF46992">
    <property type="entry name" value="Ribosomal protein S20"/>
    <property type="match status" value="1"/>
</dbReference>
<name>RS20_PARMW</name>